<comment type="function">
    <text>Guanine nucleotide-binding proteins (G proteins) are involved as modulators or transducers in various transmembrane signaling systems.</text>
</comment>
<comment type="subunit">
    <text>G proteins are composed of 3 units; alpha, beta and gamma. The alpha chain contains the guanine nucleotide binding site.</text>
</comment>
<comment type="similarity">
    <text evidence="3">Belongs to the G-alpha family.</text>
</comment>
<sequence length="354" mass="41320">MCTRNKKDITTEYLNSKKIDRELKQESTTLQPLKLLLLGSGECGKSTIFKQIISFQDEATKKEYTPPSDYVIKNIFLNILTATSTFVRVAPSYNIEFSEEENQKIQSILNVFSDLENLDQTVFTSVSDNIKYLWNSKQIQSIYNNTNRIFQLNDSTEYLMSNIDRYSKPFKPTQNDFLRVRVKTTGIVEADFKIEAVPFKLVDVGGQKNQRRKWIHCFQDITCVLFVTSINDYDTLLEEDNSTSRFTDSLELFREMVNSNWFTKSPFVLFFNKIDLFKEKIKRIPVSQHLKDFNGNDHSYEETSQFIKNKFHTTIKNSNKIVYHHFTCALDSRAIEVVFNSIQHSLLMNVAEIL</sequence>
<proteinExistence type="evidence at protein level"/>
<keyword id="KW-0903">Direct protein sequencing</keyword>
<keyword id="KW-0342">GTP-binding</keyword>
<keyword id="KW-0460">Magnesium</keyword>
<keyword id="KW-0479">Metal-binding</keyword>
<keyword id="KW-0547">Nucleotide-binding</keyword>
<keyword id="KW-1185">Reference proteome</keyword>
<keyword id="KW-0807">Transducer</keyword>
<protein>
    <recommendedName>
        <fullName>Guanine nucleotide-binding protein alpha-12 subunit</fullName>
        <shortName>G alpha-12</shortName>
    </recommendedName>
</protein>
<accession>Q54VG1</accession>
<gene>
    <name type="primary">gpaL</name>
    <name type="synonym">gpa12</name>
    <name type="ORF">DDB_G0280351</name>
</gene>
<feature type="chain" id="PRO_0000327592" description="Guanine nucleotide-binding protein alpha-12 subunit">
    <location>
        <begin position="1"/>
        <end position="354"/>
    </location>
</feature>
<feature type="domain" description="G-alpha" evidence="2">
    <location>
        <begin position="31"/>
        <end position="354"/>
    </location>
</feature>
<feature type="region of interest" description="G1 motif" evidence="2">
    <location>
        <begin position="34"/>
        <end position="47"/>
    </location>
</feature>
<feature type="region of interest" description="G2 motif" evidence="2">
    <location>
        <begin position="176"/>
        <end position="184"/>
    </location>
</feature>
<feature type="region of interest" description="G3 motif" evidence="2">
    <location>
        <begin position="199"/>
        <end position="208"/>
    </location>
</feature>
<feature type="region of interest" description="G4 motif" evidence="2">
    <location>
        <begin position="268"/>
        <end position="275"/>
    </location>
</feature>
<feature type="region of interest" description="G5 motif" evidence="2">
    <location>
        <begin position="327"/>
        <end position="332"/>
    </location>
</feature>
<feature type="binding site" evidence="1">
    <location>
        <begin position="39"/>
        <end position="46"/>
    </location>
    <ligand>
        <name>GTP</name>
        <dbReference type="ChEBI" id="CHEBI:37565"/>
    </ligand>
</feature>
<feature type="binding site" evidence="1">
    <location>
        <position position="46"/>
    </location>
    <ligand>
        <name>Mg(2+)</name>
        <dbReference type="ChEBI" id="CHEBI:18420"/>
    </ligand>
</feature>
<feature type="binding site" evidence="1">
    <location>
        <begin position="178"/>
        <end position="184"/>
    </location>
    <ligand>
        <name>GTP</name>
        <dbReference type="ChEBI" id="CHEBI:37565"/>
    </ligand>
</feature>
<feature type="binding site" evidence="1">
    <location>
        <position position="184"/>
    </location>
    <ligand>
        <name>Mg(2+)</name>
        <dbReference type="ChEBI" id="CHEBI:18420"/>
    </ligand>
</feature>
<feature type="binding site" evidence="1">
    <location>
        <begin position="203"/>
        <end position="207"/>
    </location>
    <ligand>
        <name>GTP</name>
        <dbReference type="ChEBI" id="CHEBI:37565"/>
    </ligand>
</feature>
<feature type="binding site" evidence="1">
    <location>
        <begin position="272"/>
        <end position="275"/>
    </location>
    <ligand>
        <name>GTP</name>
        <dbReference type="ChEBI" id="CHEBI:37565"/>
    </ligand>
</feature>
<feature type="binding site" evidence="1">
    <location>
        <position position="329"/>
    </location>
    <ligand>
        <name>GTP</name>
        <dbReference type="ChEBI" id="CHEBI:37565"/>
    </ligand>
</feature>
<organism>
    <name type="scientific">Dictyostelium discoideum</name>
    <name type="common">Social amoeba</name>
    <dbReference type="NCBI Taxonomy" id="44689"/>
    <lineage>
        <taxon>Eukaryota</taxon>
        <taxon>Amoebozoa</taxon>
        <taxon>Evosea</taxon>
        <taxon>Eumycetozoa</taxon>
        <taxon>Dictyostelia</taxon>
        <taxon>Dictyosteliales</taxon>
        <taxon>Dictyosteliaceae</taxon>
        <taxon>Dictyostelium</taxon>
    </lineage>
</organism>
<name>GPA12_DICDI</name>
<evidence type="ECO:0000250" key="1"/>
<evidence type="ECO:0000255" key="2">
    <source>
        <dbReference type="PROSITE-ProRule" id="PRU01230"/>
    </source>
</evidence>
<evidence type="ECO:0000305" key="3"/>
<reference key="1">
    <citation type="journal article" date="2005" name="Nature">
        <title>The genome of the social amoeba Dictyostelium discoideum.</title>
        <authorList>
            <person name="Eichinger L."/>
            <person name="Pachebat J.A."/>
            <person name="Gloeckner G."/>
            <person name="Rajandream M.A."/>
            <person name="Sucgang R."/>
            <person name="Berriman M."/>
            <person name="Song J."/>
            <person name="Olsen R."/>
            <person name="Szafranski K."/>
            <person name="Xu Q."/>
            <person name="Tunggal B."/>
            <person name="Kummerfeld S."/>
            <person name="Madera M."/>
            <person name="Konfortov B.A."/>
            <person name="Rivero F."/>
            <person name="Bankier A.T."/>
            <person name="Lehmann R."/>
            <person name="Hamlin N."/>
            <person name="Davies R."/>
            <person name="Gaudet P."/>
            <person name="Fey P."/>
            <person name="Pilcher K."/>
            <person name="Chen G."/>
            <person name="Saunders D."/>
            <person name="Sodergren E.J."/>
            <person name="Davis P."/>
            <person name="Kerhornou A."/>
            <person name="Nie X."/>
            <person name="Hall N."/>
            <person name="Anjard C."/>
            <person name="Hemphill L."/>
            <person name="Bason N."/>
            <person name="Farbrother P."/>
            <person name="Desany B."/>
            <person name="Just E."/>
            <person name="Morio T."/>
            <person name="Rost R."/>
            <person name="Churcher C.M."/>
            <person name="Cooper J."/>
            <person name="Haydock S."/>
            <person name="van Driessche N."/>
            <person name="Cronin A."/>
            <person name="Goodhead I."/>
            <person name="Muzny D.M."/>
            <person name="Mourier T."/>
            <person name="Pain A."/>
            <person name="Lu M."/>
            <person name="Harper D."/>
            <person name="Lindsay R."/>
            <person name="Hauser H."/>
            <person name="James K.D."/>
            <person name="Quiles M."/>
            <person name="Madan Babu M."/>
            <person name="Saito T."/>
            <person name="Buchrieser C."/>
            <person name="Wardroper A."/>
            <person name="Felder M."/>
            <person name="Thangavelu M."/>
            <person name="Johnson D."/>
            <person name="Knights A."/>
            <person name="Loulseged H."/>
            <person name="Mungall K.L."/>
            <person name="Oliver K."/>
            <person name="Price C."/>
            <person name="Quail M.A."/>
            <person name="Urushihara H."/>
            <person name="Hernandez J."/>
            <person name="Rabbinowitsch E."/>
            <person name="Steffen D."/>
            <person name="Sanders M."/>
            <person name="Ma J."/>
            <person name="Kohara Y."/>
            <person name="Sharp S."/>
            <person name="Simmonds M.N."/>
            <person name="Spiegler S."/>
            <person name="Tivey A."/>
            <person name="Sugano S."/>
            <person name="White B."/>
            <person name="Walker D."/>
            <person name="Woodward J.R."/>
            <person name="Winckler T."/>
            <person name="Tanaka Y."/>
            <person name="Shaulsky G."/>
            <person name="Schleicher M."/>
            <person name="Weinstock G.M."/>
            <person name="Rosenthal A."/>
            <person name="Cox E.C."/>
            <person name="Chisholm R.L."/>
            <person name="Gibbs R.A."/>
            <person name="Loomis W.F."/>
            <person name="Platzer M."/>
            <person name="Kay R.R."/>
            <person name="Williams J.G."/>
            <person name="Dear P.H."/>
            <person name="Noegel A.A."/>
            <person name="Barrell B.G."/>
            <person name="Kuspa A."/>
        </authorList>
    </citation>
    <scope>NUCLEOTIDE SEQUENCE [LARGE SCALE GENOMIC DNA]</scope>
    <source>
        <strain>AX4</strain>
    </source>
</reference>
<reference key="2">
    <citation type="submission" date="2010-01" db="UniProtKB">
        <authorList>
            <person name="Bienvenut W.V."/>
            <person name="Veltman D.M."/>
            <person name="Insall R.H."/>
        </authorList>
    </citation>
    <scope>PROTEIN SEQUENCE OF 8-17; 22-34; 138-148 AND 246-254</scope>
    <scope>IDENTIFICATION BY MASS SPECTROMETRY</scope>
</reference>
<dbReference type="EMBL" id="AAFI02000035">
    <property type="protein sequence ID" value="EAL67402.1"/>
    <property type="molecule type" value="Genomic_DNA"/>
</dbReference>
<dbReference type="RefSeq" id="XP_641394.1">
    <property type="nucleotide sequence ID" value="XM_636302.1"/>
</dbReference>
<dbReference type="SMR" id="Q54VG1"/>
<dbReference type="FunCoup" id="Q54VG1">
    <property type="interactions" value="6"/>
</dbReference>
<dbReference type="STRING" id="44689.Q54VG1"/>
<dbReference type="PaxDb" id="44689-DDB0230131"/>
<dbReference type="EnsemblProtists" id="EAL67402">
    <property type="protein sequence ID" value="EAL67402"/>
    <property type="gene ID" value="DDB_G0280351"/>
</dbReference>
<dbReference type="GeneID" id="8622528"/>
<dbReference type="KEGG" id="ddi:DDB_G0280351"/>
<dbReference type="dictyBase" id="DDB_G0280351">
    <property type="gene designation" value="gpaL"/>
</dbReference>
<dbReference type="VEuPathDB" id="AmoebaDB:DDB_G0280351"/>
<dbReference type="eggNOG" id="KOG0082">
    <property type="taxonomic scope" value="Eukaryota"/>
</dbReference>
<dbReference type="HOGENOM" id="CLU_014184_6_0_1"/>
<dbReference type="InParanoid" id="Q54VG1"/>
<dbReference type="OMA" id="YEETSQF"/>
<dbReference type="PhylomeDB" id="Q54VG1"/>
<dbReference type="Reactome" id="R-DDI-112043">
    <property type="pathway name" value="PLC beta mediated events"/>
</dbReference>
<dbReference type="Reactome" id="R-DDI-170660">
    <property type="pathway name" value="Adenylate cyclase activating pathway"/>
</dbReference>
<dbReference type="Reactome" id="R-DDI-170670">
    <property type="pathway name" value="Adenylate cyclase inhibitory pathway"/>
</dbReference>
<dbReference type="Reactome" id="R-DDI-202040">
    <property type="pathway name" value="G-protein activation"/>
</dbReference>
<dbReference type="Reactome" id="R-DDI-399997">
    <property type="pathway name" value="Acetylcholine regulates insulin secretion"/>
</dbReference>
<dbReference type="Reactome" id="R-DDI-416476">
    <property type="pathway name" value="G alpha (q) signalling events"/>
</dbReference>
<dbReference type="Reactome" id="R-DDI-416482">
    <property type="pathway name" value="G alpha (12/13) signalling events"/>
</dbReference>
<dbReference type="Reactome" id="R-DDI-418592">
    <property type="pathway name" value="ADP signalling through P2Y purinoceptor 1"/>
</dbReference>
<dbReference type="Reactome" id="R-DDI-434316">
    <property type="pathway name" value="Fatty Acids bound to GPR40 (FFAR1) regulate insulin secretion"/>
</dbReference>
<dbReference type="Reactome" id="R-DDI-9013148">
    <property type="pathway name" value="CDC42 GTPase cycle"/>
</dbReference>
<dbReference type="Reactome" id="R-DDI-9013149">
    <property type="pathway name" value="RAC1 GTPase cycle"/>
</dbReference>
<dbReference type="Reactome" id="R-DDI-9856530">
    <property type="pathway name" value="High laminar flow shear stress activates signaling by PIEZO1 and PECAM1:CDH5:KDR in endothelial cells"/>
</dbReference>
<dbReference type="PRO" id="PR:Q54VG1"/>
<dbReference type="Proteomes" id="UP000002195">
    <property type="component" value="Chromosome 3"/>
</dbReference>
<dbReference type="GO" id="GO:0005737">
    <property type="term" value="C:cytoplasm"/>
    <property type="evidence" value="ECO:0000318"/>
    <property type="project" value="GO_Central"/>
</dbReference>
<dbReference type="GO" id="GO:0005834">
    <property type="term" value="C:heterotrimeric G-protein complex"/>
    <property type="evidence" value="ECO:0000318"/>
    <property type="project" value="GO_Central"/>
</dbReference>
<dbReference type="GO" id="GO:0001664">
    <property type="term" value="F:G protein-coupled receptor binding"/>
    <property type="evidence" value="ECO:0000318"/>
    <property type="project" value="GO_Central"/>
</dbReference>
<dbReference type="GO" id="GO:0031683">
    <property type="term" value="F:G-protein beta/gamma-subunit complex binding"/>
    <property type="evidence" value="ECO:0000318"/>
    <property type="project" value="GO_Central"/>
</dbReference>
<dbReference type="GO" id="GO:0005525">
    <property type="term" value="F:GTP binding"/>
    <property type="evidence" value="ECO:0007669"/>
    <property type="project" value="UniProtKB-KW"/>
</dbReference>
<dbReference type="GO" id="GO:0003924">
    <property type="term" value="F:GTPase activity"/>
    <property type="evidence" value="ECO:0000318"/>
    <property type="project" value="GO_Central"/>
</dbReference>
<dbReference type="GO" id="GO:0046872">
    <property type="term" value="F:metal ion binding"/>
    <property type="evidence" value="ECO:0007669"/>
    <property type="project" value="UniProtKB-KW"/>
</dbReference>
<dbReference type="GO" id="GO:0007188">
    <property type="term" value="P:adenylate cyclase-modulating G protein-coupled receptor signaling pathway"/>
    <property type="evidence" value="ECO:0000318"/>
    <property type="project" value="GO_Central"/>
</dbReference>
<dbReference type="CDD" id="cd00066">
    <property type="entry name" value="G-alpha"/>
    <property type="match status" value="1"/>
</dbReference>
<dbReference type="FunFam" id="3.40.50.300:FF:000181">
    <property type="entry name" value="Guanine nucleotide-binding protein subunit alpha"/>
    <property type="match status" value="1"/>
</dbReference>
<dbReference type="Gene3D" id="1.10.400.10">
    <property type="entry name" value="GI Alpha 1, domain 2-like"/>
    <property type="match status" value="1"/>
</dbReference>
<dbReference type="Gene3D" id="3.40.50.300">
    <property type="entry name" value="P-loop containing nucleotide triphosphate hydrolases"/>
    <property type="match status" value="1"/>
</dbReference>
<dbReference type="InterPro" id="IPR001019">
    <property type="entry name" value="Gprotein_alpha_su"/>
</dbReference>
<dbReference type="InterPro" id="IPR011025">
    <property type="entry name" value="GproteinA_insert"/>
</dbReference>
<dbReference type="InterPro" id="IPR027417">
    <property type="entry name" value="P-loop_NTPase"/>
</dbReference>
<dbReference type="PANTHER" id="PTHR10218">
    <property type="entry name" value="GTP-BINDING PROTEIN ALPHA SUBUNIT"/>
    <property type="match status" value="1"/>
</dbReference>
<dbReference type="PANTHER" id="PTHR10218:SF200">
    <property type="entry name" value="GUANINE NUCLEOTIDE-BINDING PROTEIN ALPHA-12 SUBUNIT"/>
    <property type="match status" value="1"/>
</dbReference>
<dbReference type="Pfam" id="PF00503">
    <property type="entry name" value="G-alpha"/>
    <property type="match status" value="1"/>
</dbReference>
<dbReference type="PRINTS" id="PR00318">
    <property type="entry name" value="GPROTEINA"/>
</dbReference>
<dbReference type="SMART" id="SM00275">
    <property type="entry name" value="G_alpha"/>
    <property type="match status" value="1"/>
</dbReference>
<dbReference type="SUPFAM" id="SSF52540">
    <property type="entry name" value="P-loop containing nucleoside triphosphate hydrolases"/>
    <property type="match status" value="1"/>
</dbReference>
<dbReference type="SUPFAM" id="SSF47895">
    <property type="entry name" value="Transducin (alpha subunit), insertion domain"/>
    <property type="match status" value="1"/>
</dbReference>
<dbReference type="PROSITE" id="PS51882">
    <property type="entry name" value="G_ALPHA"/>
    <property type="match status" value="1"/>
</dbReference>